<gene>
    <name type="primary">Bhlhe23</name>
    <name type="synonym">Bhlhb4</name>
    <name type="synonym">H20</name>
</gene>
<comment type="function">
    <text evidence="3 4">May function as transcriptional repressor. May modulate the expression of genes required for the differentiation and/or maintenance of pancreatic and neuronal cell types. May be important for rod bipolar cell maturation.</text>
</comment>
<comment type="subcellular location">
    <subcellularLocation>
        <location evidence="5">Nucleus</location>
    </subcellularLocation>
</comment>
<comment type="tissue specificity">
    <text>Expressed in brain and retina.</text>
</comment>
<comment type="developmental stage">
    <text evidence="3">Expression is confined to regions of the developing nervous system and pancreas. At 13 dpc expressed at lower levels in the trigeminal ganglion, the ganglionic eminence, the ventral neural tube, and dorsal root ganglia. Expressed at moderate levels in the tectum of the embryonic midbrain. Most prominent expression is in the diencephalon, where it flanks either side of the roof of the third ventricle, dorsal/caudal to the dorsal thalamus. Detected in the pancreas during the time when most of the pancreatic endocrine cell types are beginning to differentiate and endocrine precursor cells remain loosely associated with the duct epithelium until they begin to form aggregates late in development.</text>
</comment>
<comment type="disruption phenotype">
    <text evidence="4">Disrupted rod signaling and profound retinal dysfunction.</text>
</comment>
<dbReference type="EMBL" id="AF454760">
    <property type="protein sequence ID" value="AAL51039.1"/>
    <property type="molecule type" value="mRNA"/>
</dbReference>
<dbReference type="EMBL" id="AB053118">
    <property type="protein sequence ID" value="BAC81773.1"/>
    <property type="molecule type" value="Genomic_DNA"/>
</dbReference>
<dbReference type="EMBL" id="AK044215">
    <property type="protein sequence ID" value="BAC31821.1"/>
    <property type="molecule type" value="mRNA"/>
</dbReference>
<dbReference type="EMBL" id="AK051155">
    <property type="protein sequence ID" value="BAC34539.1"/>
    <property type="molecule type" value="mRNA"/>
</dbReference>
<dbReference type="CCDS" id="CCDS17187.1"/>
<dbReference type="RefSeq" id="NP_542372.2">
    <property type="nucleotide sequence ID" value="NM_080641.5"/>
</dbReference>
<dbReference type="SMR" id="Q8BGW3"/>
<dbReference type="FunCoup" id="Q8BGW3">
    <property type="interactions" value="885"/>
</dbReference>
<dbReference type="STRING" id="10090.ENSMUSP00000104506"/>
<dbReference type="iPTMnet" id="Q8BGW3"/>
<dbReference type="PhosphoSitePlus" id="Q8BGW3"/>
<dbReference type="PaxDb" id="10090-ENSMUSP00000104506"/>
<dbReference type="ProteomicsDB" id="273452"/>
<dbReference type="Antibodypedia" id="29641">
    <property type="antibodies" value="20 antibodies from 12 providers"/>
</dbReference>
<dbReference type="DNASU" id="140489"/>
<dbReference type="Ensembl" id="ENSMUST00000108878.2">
    <property type="protein sequence ID" value="ENSMUSP00000104506.2"/>
    <property type="gene ID" value="ENSMUSG00000045493.5"/>
</dbReference>
<dbReference type="GeneID" id="140489"/>
<dbReference type="KEGG" id="mmu:140489"/>
<dbReference type="UCSC" id="uc008okb.2">
    <property type="organism name" value="mouse"/>
</dbReference>
<dbReference type="AGR" id="MGI:2153710"/>
<dbReference type="CTD" id="128408"/>
<dbReference type="MGI" id="MGI:2153710">
    <property type="gene designation" value="Bhlhe23"/>
</dbReference>
<dbReference type="VEuPathDB" id="HostDB:ENSMUSG00000045493"/>
<dbReference type="eggNOG" id="KOG3898">
    <property type="taxonomic scope" value="Eukaryota"/>
</dbReference>
<dbReference type="GeneTree" id="ENSGT00940000162992"/>
<dbReference type="HOGENOM" id="CLU_070971_2_0_1"/>
<dbReference type="InParanoid" id="Q8BGW3"/>
<dbReference type="OMA" id="NCPEKCT"/>
<dbReference type="OrthoDB" id="10011855at2759"/>
<dbReference type="PhylomeDB" id="Q8BGW3"/>
<dbReference type="TreeFam" id="TF322733"/>
<dbReference type="BioGRID-ORCS" id="140489">
    <property type="hits" value="0 hits in 79 CRISPR screens"/>
</dbReference>
<dbReference type="PRO" id="PR:Q8BGW3"/>
<dbReference type="Proteomes" id="UP000000589">
    <property type="component" value="Chromosome 2"/>
</dbReference>
<dbReference type="RNAct" id="Q8BGW3">
    <property type="molecule type" value="protein"/>
</dbReference>
<dbReference type="Bgee" id="ENSMUSG00000045493">
    <property type="expression patterns" value="Expressed in ureteric bud trunk and 28 other cell types or tissues"/>
</dbReference>
<dbReference type="ExpressionAtlas" id="Q8BGW3">
    <property type="expression patterns" value="baseline and differential"/>
</dbReference>
<dbReference type="GO" id="GO:0005634">
    <property type="term" value="C:nucleus"/>
    <property type="evidence" value="ECO:0007669"/>
    <property type="project" value="UniProtKB-SubCell"/>
</dbReference>
<dbReference type="GO" id="GO:0003677">
    <property type="term" value="F:DNA binding"/>
    <property type="evidence" value="ECO:0007669"/>
    <property type="project" value="UniProtKB-KW"/>
</dbReference>
<dbReference type="GO" id="GO:0046983">
    <property type="term" value="F:protein dimerization activity"/>
    <property type="evidence" value="ECO:0007669"/>
    <property type="project" value="InterPro"/>
</dbReference>
<dbReference type="GO" id="GO:0046671">
    <property type="term" value="P:negative regulation of retinal cell programmed cell death"/>
    <property type="evidence" value="ECO:0000315"/>
    <property type="project" value="MGI"/>
</dbReference>
<dbReference type="GO" id="GO:0045944">
    <property type="term" value="P:positive regulation of transcription by RNA polymerase II"/>
    <property type="evidence" value="ECO:0000314"/>
    <property type="project" value="MGI"/>
</dbReference>
<dbReference type="GO" id="GO:0048050">
    <property type="term" value="P:post-embryonic eye morphogenesis"/>
    <property type="evidence" value="ECO:0000315"/>
    <property type="project" value="MGI"/>
</dbReference>
<dbReference type="GO" id="GO:0046666">
    <property type="term" value="P:retinal cell programmed cell death"/>
    <property type="evidence" value="ECO:0000315"/>
    <property type="project" value="MGI"/>
</dbReference>
<dbReference type="GO" id="GO:0046548">
    <property type="term" value="P:retinal rod cell development"/>
    <property type="evidence" value="ECO:0000315"/>
    <property type="project" value="MGI"/>
</dbReference>
<dbReference type="CDD" id="cd18954">
    <property type="entry name" value="bHLH_TS_bHLHe22_bHLHb5"/>
    <property type="match status" value="1"/>
</dbReference>
<dbReference type="FunFam" id="4.10.280.10:FF:000026">
    <property type="entry name" value="Basic helix-loop-helix family, member e23"/>
    <property type="match status" value="1"/>
</dbReference>
<dbReference type="Gene3D" id="4.10.280.10">
    <property type="entry name" value="Helix-loop-helix DNA-binding domain"/>
    <property type="match status" value="1"/>
</dbReference>
<dbReference type="InterPro" id="IPR011598">
    <property type="entry name" value="bHLH_dom"/>
</dbReference>
<dbReference type="InterPro" id="IPR050359">
    <property type="entry name" value="bHLH_transcription_factors"/>
</dbReference>
<dbReference type="InterPro" id="IPR036638">
    <property type="entry name" value="HLH_DNA-bd_sf"/>
</dbReference>
<dbReference type="PANTHER" id="PTHR19290">
    <property type="entry name" value="BASIC HELIX-LOOP-HELIX PROTEIN NEUROGENIN-RELATED"/>
    <property type="match status" value="1"/>
</dbReference>
<dbReference type="PANTHER" id="PTHR19290:SF53">
    <property type="entry name" value="CLASS E BASIC HELIX-LOOP-HELIX PROTEIN 23"/>
    <property type="match status" value="1"/>
</dbReference>
<dbReference type="Pfam" id="PF00010">
    <property type="entry name" value="HLH"/>
    <property type="match status" value="1"/>
</dbReference>
<dbReference type="SMART" id="SM00353">
    <property type="entry name" value="HLH"/>
    <property type="match status" value="1"/>
</dbReference>
<dbReference type="SUPFAM" id="SSF47459">
    <property type="entry name" value="HLH, helix-loop-helix DNA-binding domain"/>
    <property type="match status" value="1"/>
</dbReference>
<dbReference type="PROSITE" id="PS50888">
    <property type="entry name" value="BHLH"/>
    <property type="match status" value="1"/>
</dbReference>
<organism>
    <name type="scientific">Mus musculus</name>
    <name type="common">Mouse</name>
    <dbReference type="NCBI Taxonomy" id="10090"/>
    <lineage>
        <taxon>Eukaryota</taxon>
        <taxon>Metazoa</taxon>
        <taxon>Chordata</taxon>
        <taxon>Craniata</taxon>
        <taxon>Vertebrata</taxon>
        <taxon>Euteleostomi</taxon>
        <taxon>Mammalia</taxon>
        <taxon>Eutheria</taxon>
        <taxon>Euarchontoglires</taxon>
        <taxon>Glires</taxon>
        <taxon>Rodentia</taxon>
        <taxon>Myomorpha</taxon>
        <taxon>Muroidea</taxon>
        <taxon>Muridae</taxon>
        <taxon>Murinae</taxon>
        <taxon>Mus</taxon>
        <taxon>Mus</taxon>
    </lineage>
</organism>
<protein>
    <recommendedName>
        <fullName>Class E basic helix-loop-helix protein 23</fullName>
        <shortName>bHLHe23</shortName>
    </recommendedName>
    <alternativeName>
        <fullName>Class B basic helix-loop-helix protein 4</fullName>
        <shortName>bHLHb4</shortName>
    </alternativeName>
</protein>
<accession>Q8BGW3</accession>
<accession>Q71MB7</accession>
<evidence type="ECO:0000255" key="1">
    <source>
        <dbReference type="PROSITE-ProRule" id="PRU00981"/>
    </source>
</evidence>
<evidence type="ECO:0000256" key="2">
    <source>
        <dbReference type="SAM" id="MobiDB-lite"/>
    </source>
</evidence>
<evidence type="ECO:0000269" key="3">
    <source>
    </source>
</evidence>
<evidence type="ECO:0000269" key="4">
    <source>
    </source>
</evidence>
<evidence type="ECO:0000305" key="5"/>
<name>BHE23_MOUSE</name>
<sequence length="223" mass="23701">MAELKSLSGDSYLALSHSYTATGHAYAAARGPETTRGFGASGPGGDLPAAPASRVPAATVESSGEQSGDEDEAFERRRRRRGSGVAVDARRRPREQRSLRLSINARERRRMHDLNDALDGLRAVIPYAHSPSVRKLSKIATLLLAKNYILMQAQALEEMRRLVAYLNQGQGLAAPVAAAPLTPFGQAAIYPFSAGTALGPCPDKCATFSGSPSALCKHCGEKP</sequence>
<proteinExistence type="evidence at transcript level"/>
<reference key="1">
    <citation type="journal article" date="2002" name="Genomics">
        <title>BHLHB4 is a bHLH transcriptional regulator in pancreas and brain that marks the dimesencephalic boundary.</title>
        <authorList>
            <person name="Bramblett D.E."/>
            <person name="Copeland N.G."/>
            <person name="Jenkins N.A."/>
            <person name="Tsai M.-J."/>
        </authorList>
    </citation>
    <scope>NUCLEOTIDE SEQUENCE [MRNA]</scope>
    <scope>FUNCTION</scope>
    <scope>DEVELOPMENTAL STAGE</scope>
</reference>
<reference key="2">
    <citation type="submission" date="2000-12" db="EMBL/GenBank/DDBJ databases">
        <title>Mus musculus novel bHLH transcription factor mh20 gene, complete cds.</title>
        <authorList>
            <person name="Takebayashi H."/>
            <person name="Nabeshima Y."/>
        </authorList>
    </citation>
    <scope>NUCLEOTIDE SEQUENCE [GENOMIC DNA]</scope>
    <source>
        <strain>129/SvJ</strain>
    </source>
</reference>
<reference key="3">
    <citation type="journal article" date="2005" name="Science">
        <title>The transcriptional landscape of the mammalian genome.</title>
        <authorList>
            <person name="Carninci P."/>
            <person name="Kasukawa T."/>
            <person name="Katayama S."/>
            <person name="Gough J."/>
            <person name="Frith M.C."/>
            <person name="Maeda N."/>
            <person name="Oyama R."/>
            <person name="Ravasi T."/>
            <person name="Lenhard B."/>
            <person name="Wells C."/>
            <person name="Kodzius R."/>
            <person name="Shimokawa K."/>
            <person name="Bajic V.B."/>
            <person name="Brenner S.E."/>
            <person name="Batalov S."/>
            <person name="Forrest A.R."/>
            <person name="Zavolan M."/>
            <person name="Davis M.J."/>
            <person name="Wilming L.G."/>
            <person name="Aidinis V."/>
            <person name="Allen J.E."/>
            <person name="Ambesi-Impiombato A."/>
            <person name="Apweiler R."/>
            <person name="Aturaliya R.N."/>
            <person name="Bailey T.L."/>
            <person name="Bansal M."/>
            <person name="Baxter L."/>
            <person name="Beisel K.W."/>
            <person name="Bersano T."/>
            <person name="Bono H."/>
            <person name="Chalk A.M."/>
            <person name="Chiu K.P."/>
            <person name="Choudhary V."/>
            <person name="Christoffels A."/>
            <person name="Clutterbuck D.R."/>
            <person name="Crowe M.L."/>
            <person name="Dalla E."/>
            <person name="Dalrymple B.P."/>
            <person name="de Bono B."/>
            <person name="Della Gatta G."/>
            <person name="di Bernardo D."/>
            <person name="Down T."/>
            <person name="Engstrom P."/>
            <person name="Fagiolini M."/>
            <person name="Faulkner G."/>
            <person name="Fletcher C.F."/>
            <person name="Fukushima T."/>
            <person name="Furuno M."/>
            <person name="Futaki S."/>
            <person name="Gariboldi M."/>
            <person name="Georgii-Hemming P."/>
            <person name="Gingeras T.R."/>
            <person name="Gojobori T."/>
            <person name="Green R.E."/>
            <person name="Gustincich S."/>
            <person name="Harbers M."/>
            <person name="Hayashi Y."/>
            <person name="Hensch T.K."/>
            <person name="Hirokawa N."/>
            <person name="Hill D."/>
            <person name="Huminiecki L."/>
            <person name="Iacono M."/>
            <person name="Ikeo K."/>
            <person name="Iwama A."/>
            <person name="Ishikawa T."/>
            <person name="Jakt M."/>
            <person name="Kanapin A."/>
            <person name="Katoh M."/>
            <person name="Kawasawa Y."/>
            <person name="Kelso J."/>
            <person name="Kitamura H."/>
            <person name="Kitano H."/>
            <person name="Kollias G."/>
            <person name="Krishnan S.P."/>
            <person name="Kruger A."/>
            <person name="Kummerfeld S.K."/>
            <person name="Kurochkin I.V."/>
            <person name="Lareau L.F."/>
            <person name="Lazarevic D."/>
            <person name="Lipovich L."/>
            <person name="Liu J."/>
            <person name="Liuni S."/>
            <person name="McWilliam S."/>
            <person name="Madan Babu M."/>
            <person name="Madera M."/>
            <person name="Marchionni L."/>
            <person name="Matsuda H."/>
            <person name="Matsuzawa S."/>
            <person name="Miki H."/>
            <person name="Mignone F."/>
            <person name="Miyake S."/>
            <person name="Morris K."/>
            <person name="Mottagui-Tabar S."/>
            <person name="Mulder N."/>
            <person name="Nakano N."/>
            <person name="Nakauchi H."/>
            <person name="Ng P."/>
            <person name="Nilsson R."/>
            <person name="Nishiguchi S."/>
            <person name="Nishikawa S."/>
            <person name="Nori F."/>
            <person name="Ohara O."/>
            <person name="Okazaki Y."/>
            <person name="Orlando V."/>
            <person name="Pang K.C."/>
            <person name="Pavan W.J."/>
            <person name="Pavesi G."/>
            <person name="Pesole G."/>
            <person name="Petrovsky N."/>
            <person name="Piazza S."/>
            <person name="Reed J."/>
            <person name="Reid J.F."/>
            <person name="Ring B.Z."/>
            <person name="Ringwald M."/>
            <person name="Rost B."/>
            <person name="Ruan Y."/>
            <person name="Salzberg S.L."/>
            <person name="Sandelin A."/>
            <person name="Schneider C."/>
            <person name="Schoenbach C."/>
            <person name="Sekiguchi K."/>
            <person name="Semple C.A."/>
            <person name="Seno S."/>
            <person name="Sessa L."/>
            <person name="Sheng Y."/>
            <person name="Shibata Y."/>
            <person name="Shimada H."/>
            <person name="Shimada K."/>
            <person name="Silva D."/>
            <person name="Sinclair B."/>
            <person name="Sperling S."/>
            <person name="Stupka E."/>
            <person name="Sugiura K."/>
            <person name="Sultana R."/>
            <person name="Takenaka Y."/>
            <person name="Taki K."/>
            <person name="Tammoja K."/>
            <person name="Tan S.L."/>
            <person name="Tang S."/>
            <person name="Taylor M.S."/>
            <person name="Tegner J."/>
            <person name="Teichmann S.A."/>
            <person name="Ueda H.R."/>
            <person name="van Nimwegen E."/>
            <person name="Verardo R."/>
            <person name="Wei C.L."/>
            <person name="Yagi K."/>
            <person name="Yamanishi H."/>
            <person name="Zabarovsky E."/>
            <person name="Zhu S."/>
            <person name="Zimmer A."/>
            <person name="Hide W."/>
            <person name="Bult C."/>
            <person name="Grimmond S.M."/>
            <person name="Teasdale R.D."/>
            <person name="Liu E.T."/>
            <person name="Brusic V."/>
            <person name="Quackenbush J."/>
            <person name="Wahlestedt C."/>
            <person name="Mattick J.S."/>
            <person name="Hume D.A."/>
            <person name="Kai C."/>
            <person name="Sasaki D."/>
            <person name="Tomaru Y."/>
            <person name="Fukuda S."/>
            <person name="Kanamori-Katayama M."/>
            <person name="Suzuki M."/>
            <person name="Aoki J."/>
            <person name="Arakawa T."/>
            <person name="Iida J."/>
            <person name="Imamura K."/>
            <person name="Itoh M."/>
            <person name="Kato T."/>
            <person name="Kawaji H."/>
            <person name="Kawagashira N."/>
            <person name="Kawashima T."/>
            <person name="Kojima M."/>
            <person name="Kondo S."/>
            <person name="Konno H."/>
            <person name="Nakano K."/>
            <person name="Ninomiya N."/>
            <person name="Nishio T."/>
            <person name="Okada M."/>
            <person name="Plessy C."/>
            <person name="Shibata K."/>
            <person name="Shiraki T."/>
            <person name="Suzuki S."/>
            <person name="Tagami M."/>
            <person name="Waki K."/>
            <person name="Watahiki A."/>
            <person name="Okamura-Oho Y."/>
            <person name="Suzuki H."/>
            <person name="Kawai J."/>
            <person name="Hayashizaki Y."/>
        </authorList>
    </citation>
    <scope>NUCLEOTIDE SEQUENCE [LARGE SCALE MRNA]</scope>
    <source>
        <strain>C57BL/6J</strain>
        <tissue>Retina</tissue>
        <tissue>Spinal ganglion</tissue>
    </source>
</reference>
<reference key="4">
    <citation type="journal article" date="2004" name="Neuron">
        <title>The transcription factor Bhlhb4 is required for rod bipolar cell maturation.</title>
        <authorList>
            <person name="Bramblett D.E."/>
            <person name="Pennesi M.E."/>
            <person name="Wu S.M."/>
            <person name="Tsai M.-J."/>
        </authorList>
    </citation>
    <scope>DISRUPTION PHENOTYPE</scope>
    <scope>FUNCTION</scope>
</reference>
<keyword id="KW-0238">DNA-binding</keyword>
<keyword id="KW-0539">Nucleus</keyword>
<keyword id="KW-1185">Reference proteome</keyword>
<keyword id="KW-0804">Transcription</keyword>
<keyword id="KW-0805">Transcription regulation</keyword>
<feature type="chain" id="PRO_0000245527" description="Class E basic helix-loop-helix protein 23">
    <location>
        <begin position="1"/>
        <end position="223"/>
    </location>
</feature>
<feature type="domain" description="bHLH" evidence="1">
    <location>
        <begin position="98"/>
        <end position="152"/>
    </location>
</feature>
<feature type="region of interest" description="Disordered" evidence="2">
    <location>
        <begin position="32"/>
        <end position="93"/>
    </location>
</feature>
<feature type="sequence conflict" description="In Ref. 1; AAL51039." evidence="5" ref="1">
    <original>V</original>
    <variation>F</variation>
    <location>
        <position position="87"/>
    </location>
</feature>
<feature type="sequence conflict" description="In Ref. 1; AAL51039." evidence="5" ref="1">
    <original>L</original>
    <variation>F</variation>
    <location>
        <position position="101"/>
    </location>
</feature>